<keyword id="KW-0963">Cytoplasm</keyword>
<keyword id="KW-0489">Methyltransferase</keyword>
<keyword id="KW-0698">rRNA processing</keyword>
<keyword id="KW-0949">S-adenosyl-L-methionine</keyword>
<keyword id="KW-0808">Transferase</keyword>
<feature type="chain" id="PRO_0000366479" description="Ribosomal RNA large subunit methyltransferase G">
    <location>
        <begin position="1"/>
        <end position="374"/>
    </location>
</feature>
<evidence type="ECO:0000255" key="1">
    <source>
        <dbReference type="HAMAP-Rule" id="MF_01859"/>
    </source>
</evidence>
<sequence>MPLLTTPYAELDLIRQPEQANDPLQAFDAADEYLLAQLHDQAPDANCRVLVLNDSFGALAASLAGQLQVVSSGDSHLGHLALEKNLARNGLPFDSVPFVPASEHWQGPFDRVLVRVPKTLALLEEQLIRLQGQLAPGAQVIAGAMIKHLPRAAGDLMEKYIGPVQASLALKKARLLTATVAERPLAKSPYPSCYRLDVPALDLINHANVFCREGLDIGTRAFLPHLPRDLGRARVADLGCGNGVLAIASALANPEAEYTLVDESYMAVQSAQENWLAALGERPATFFAADGLAGLEKQSLDVVLCNPPFHQQQVVGDFLAWRMFQQAREALVVGGALYIVGNRHLGYHSKLARLFRGVEQVAATPKFVILKARK</sequence>
<name>RLMG_PSEP1</name>
<protein>
    <recommendedName>
        <fullName evidence="1">Ribosomal RNA large subunit methyltransferase G</fullName>
        <ecNumber evidence="1">2.1.1.174</ecNumber>
    </recommendedName>
    <alternativeName>
        <fullName evidence="1">23S rRNA m2G1835 methyltransferase</fullName>
    </alternativeName>
    <alternativeName>
        <fullName evidence="1">rRNA (guanine-N(2)-)-methyltransferase RlmG</fullName>
    </alternativeName>
</protein>
<organism>
    <name type="scientific">Pseudomonas putida (strain ATCC 700007 / DSM 6899 / JCM 31910 / BCRC 17059 / LMG 24140 / F1)</name>
    <dbReference type="NCBI Taxonomy" id="351746"/>
    <lineage>
        <taxon>Bacteria</taxon>
        <taxon>Pseudomonadati</taxon>
        <taxon>Pseudomonadota</taxon>
        <taxon>Gammaproteobacteria</taxon>
        <taxon>Pseudomonadales</taxon>
        <taxon>Pseudomonadaceae</taxon>
        <taxon>Pseudomonas</taxon>
    </lineage>
</organism>
<accession>A5W920</accession>
<gene>
    <name evidence="1" type="primary">rlmG</name>
    <name type="ordered locus">Pput_4510</name>
</gene>
<reference key="1">
    <citation type="submission" date="2007-05" db="EMBL/GenBank/DDBJ databases">
        <title>Complete sequence of Pseudomonas putida F1.</title>
        <authorList>
            <consortium name="US DOE Joint Genome Institute"/>
            <person name="Copeland A."/>
            <person name="Lucas S."/>
            <person name="Lapidus A."/>
            <person name="Barry K."/>
            <person name="Detter J.C."/>
            <person name="Glavina del Rio T."/>
            <person name="Hammon N."/>
            <person name="Israni S."/>
            <person name="Dalin E."/>
            <person name="Tice H."/>
            <person name="Pitluck S."/>
            <person name="Chain P."/>
            <person name="Malfatti S."/>
            <person name="Shin M."/>
            <person name="Vergez L."/>
            <person name="Schmutz J."/>
            <person name="Larimer F."/>
            <person name="Land M."/>
            <person name="Hauser L."/>
            <person name="Kyrpides N."/>
            <person name="Lykidis A."/>
            <person name="Parales R."/>
            <person name="Richardson P."/>
        </authorList>
    </citation>
    <scope>NUCLEOTIDE SEQUENCE [LARGE SCALE GENOMIC DNA]</scope>
    <source>
        <strain>ATCC 700007 / DSM 6899 / JCM 31910 / BCRC 17059 / LMG 24140 / F1</strain>
    </source>
</reference>
<dbReference type="EC" id="2.1.1.174" evidence="1"/>
<dbReference type="EMBL" id="CP000712">
    <property type="protein sequence ID" value="ABQ80630.1"/>
    <property type="molecule type" value="Genomic_DNA"/>
</dbReference>
<dbReference type="SMR" id="A5W920"/>
<dbReference type="KEGG" id="ppf:Pput_4510"/>
<dbReference type="eggNOG" id="COG2813">
    <property type="taxonomic scope" value="Bacteria"/>
</dbReference>
<dbReference type="HOGENOM" id="CLU_040288_4_0_6"/>
<dbReference type="GO" id="GO:0005737">
    <property type="term" value="C:cytoplasm"/>
    <property type="evidence" value="ECO:0007669"/>
    <property type="project" value="UniProtKB-SubCell"/>
</dbReference>
<dbReference type="GO" id="GO:0052916">
    <property type="term" value="F:23S rRNA (guanine(1835)-N(2))-methyltransferase activity"/>
    <property type="evidence" value="ECO:0007669"/>
    <property type="project" value="UniProtKB-EC"/>
</dbReference>
<dbReference type="GO" id="GO:0003676">
    <property type="term" value="F:nucleic acid binding"/>
    <property type="evidence" value="ECO:0007669"/>
    <property type="project" value="InterPro"/>
</dbReference>
<dbReference type="CDD" id="cd02440">
    <property type="entry name" value="AdoMet_MTases"/>
    <property type="match status" value="1"/>
</dbReference>
<dbReference type="Gene3D" id="3.40.50.150">
    <property type="entry name" value="Vaccinia Virus protein VP39"/>
    <property type="match status" value="2"/>
</dbReference>
<dbReference type="HAMAP" id="MF_01859">
    <property type="entry name" value="23SrRNA_methyltr_G"/>
    <property type="match status" value="1"/>
</dbReference>
<dbReference type="InterPro" id="IPR002052">
    <property type="entry name" value="DNA_methylase_N6_adenine_CS"/>
</dbReference>
<dbReference type="InterPro" id="IPR017237">
    <property type="entry name" value="rRNA_m2G-MeTrfase_RlmG"/>
</dbReference>
<dbReference type="InterPro" id="IPR046977">
    <property type="entry name" value="RsmC/RlmG"/>
</dbReference>
<dbReference type="InterPro" id="IPR029063">
    <property type="entry name" value="SAM-dependent_MTases_sf"/>
</dbReference>
<dbReference type="InterPro" id="IPR007848">
    <property type="entry name" value="Small_mtfrase_dom"/>
</dbReference>
<dbReference type="PANTHER" id="PTHR47816:SF5">
    <property type="entry name" value="RIBOSOMAL RNA LARGE SUBUNIT METHYLTRANSFERASE G"/>
    <property type="match status" value="1"/>
</dbReference>
<dbReference type="PANTHER" id="PTHR47816">
    <property type="entry name" value="RIBOSOMAL RNA SMALL SUBUNIT METHYLTRANSFERASE C"/>
    <property type="match status" value="1"/>
</dbReference>
<dbReference type="Pfam" id="PF05175">
    <property type="entry name" value="MTS"/>
    <property type="match status" value="1"/>
</dbReference>
<dbReference type="PIRSF" id="PIRSF037565">
    <property type="entry name" value="RRNA_m2G_Mtase_RsmD_prd"/>
    <property type="match status" value="1"/>
</dbReference>
<dbReference type="SUPFAM" id="SSF53335">
    <property type="entry name" value="S-adenosyl-L-methionine-dependent methyltransferases"/>
    <property type="match status" value="1"/>
</dbReference>
<proteinExistence type="inferred from homology"/>
<comment type="function">
    <text evidence="1">Specifically methylates the guanine in position 1835 (m2G1835) of 23S rRNA.</text>
</comment>
<comment type="catalytic activity">
    <reaction evidence="1">
        <text>guanosine(1835) in 23S rRNA + S-adenosyl-L-methionine = N(2)-methylguanosine(1835) in 23S rRNA + S-adenosyl-L-homocysteine + H(+)</text>
        <dbReference type="Rhea" id="RHEA:42744"/>
        <dbReference type="Rhea" id="RHEA-COMP:10217"/>
        <dbReference type="Rhea" id="RHEA-COMP:10218"/>
        <dbReference type="ChEBI" id="CHEBI:15378"/>
        <dbReference type="ChEBI" id="CHEBI:57856"/>
        <dbReference type="ChEBI" id="CHEBI:59789"/>
        <dbReference type="ChEBI" id="CHEBI:74269"/>
        <dbReference type="ChEBI" id="CHEBI:74481"/>
        <dbReference type="EC" id="2.1.1.174"/>
    </reaction>
</comment>
<comment type="subcellular location">
    <subcellularLocation>
        <location evidence="1">Cytoplasm</location>
    </subcellularLocation>
</comment>
<comment type="similarity">
    <text evidence="1">Belongs to the methyltransferase superfamily. RlmG family.</text>
</comment>